<sequence length="433" mass="45875">MVSTSSYQTTKSKEIFTAAQKLMPGGVSSPVRAFKSVGGQPIVFESVKGAYIRDVDGNEYIDYVGTWGPAICGHAHPEVIAALHDALDKGTSFGAPCVQENILAEMVIDAVPSIEMVRFVNSGTEACMSVLRLMRAFTGRDKIIKFEGCYHGHADMFLVKAGSGVATLGLPDSPGVPKTTTNNTLTAPYNDLEAVKALFVENPDSIAGVILEPVVGNAGFIVPDAGFLEGLRELTKEYGALLMFDEVMTGFRIAYGGAQEKFGITPDLTTLGKVIGGGLPVGAYGGRADIMAMVAPAGPMYQAGTLSGNPLAMTAGIKTLELLQRPGTYQYLDKVTKSLTEGLLKVARDAGHSVSGGYISAMFGMFFTGSPVHNYEDAKKADVAKFGRFHRGMLERGVYLAPSQFEAGFTSLAHTEADIERTLAAAKEVLASL</sequence>
<reference key="1">
    <citation type="journal article" date="2007" name="DNA Res.">
        <title>Complete genomic structure of the bloom-forming toxic cyanobacterium Microcystis aeruginosa NIES-843.</title>
        <authorList>
            <person name="Kaneko T."/>
            <person name="Nakajima N."/>
            <person name="Okamoto S."/>
            <person name="Suzuki I."/>
            <person name="Tanabe Y."/>
            <person name="Tamaoki M."/>
            <person name="Nakamura Y."/>
            <person name="Kasai F."/>
            <person name="Watanabe A."/>
            <person name="Kawashima K."/>
            <person name="Kishida Y."/>
            <person name="Ono A."/>
            <person name="Shimizu Y."/>
            <person name="Takahashi C."/>
            <person name="Minami C."/>
            <person name="Fujishiro T."/>
            <person name="Kohara M."/>
            <person name="Katoh M."/>
            <person name="Nakazaki N."/>
            <person name="Nakayama S."/>
            <person name="Yamada M."/>
            <person name="Tabata S."/>
            <person name="Watanabe M.M."/>
        </authorList>
    </citation>
    <scope>NUCLEOTIDE SEQUENCE [LARGE SCALE GENOMIC DNA]</scope>
    <source>
        <strain>NIES-843 / IAM M-247</strain>
    </source>
</reference>
<organism>
    <name type="scientific">Microcystis aeruginosa (strain NIES-843 / IAM M-2473)</name>
    <dbReference type="NCBI Taxonomy" id="449447"/>
    <lineage>
        <taxon>Bacteria</taxon>
        <taxon>Bacillati</taxon>
        <taxon>Cyanobacteriota</taxon>
        <taxon>Cyanophyceae</taxon>
        <taxon>Oscillatoriophycideae</taxon>
        <taxon>Chroococcales</taxon>
        <taxon>Microcystaceae</taxon>
        <taxon>Microcystis</taxon>
    </lineage>
</organism>
<gene>
    <name evidence="1" type="primary">hemL</name>
    <name type="ordered locus">MAE_38680</name>
</gene>
<accession>B0JPW6</accession>
<proteinExistence type="inferred from homology"/>
<feature type="chain" id="PRO_1000121901" description="Glutamate-1-semialdehyde 2,1-aminomutase">
    <location>
        <begin position="1"/>
        <end position="433"/>
    </location>
</feature>
<feature type="modified residue" description="N6-(pyridoxal phosphate)lysine" evidence="1">
    <location>
        <position position="273"/>
    </location>
</feature>
<keyword id="KW-0149">Chlorophyll biosynthesis</keyword>
<keyword id="KW-0963">Cytoplasm</keyword>
<keyword id="KW-0413">Isomerase</keyword>
<keyword id="KW-0627">Porphyrin biosynthesis</keyword>
<keyword id="KW-0663">Pyridoxal phosphate</keyword>
<name>GSA_MICAN</name>
<dbReference type="EC" id="5.4.3.8" evidence="1"/>
<dbReference type="EMBL" id="AP009552">
    <property type="protein sequence ID" value="BAG03690.1"/>
    <property type="molecule type" value="Genomic_DNA"/>
</dbReference>
<dbReference type="RefSeq" id="WP_002761693.1">
    <property type="nucleotide sequence ID" value="NC_010296.1"/>
</dbReference>
<dbReference type="SMR" id="B0JPW6"/>
<dbReference type="STRING" id="449447.MAE_38680"/>
<dbReference type="PaxDb" id="449447-MAE_38680"/>
<dbReference type="EnsemblBacteria" id="BAG03690">
    <property type="protein sequence ID" value="BAG03690"/>
    <property type="gene ID" value="MAE_38680"/>
</dbReference>
<dbReference type="KEGG" id="mar:MAE_38680"/>
<dbReference type="eggNOG" id="COG0001">
    <property type="taxonomic scope" value="Bacteria"/>
</dbReference>
<dbReference type="HOGENOM" id="CLU_016922_1_5_3"/>
<dbReference type="BioCyc" id="MAER449447:MAE_RS16710-MONOMER"/>
<dbReference type="UniPathway" id="UPA00251">
    <property type="reaction ID" value="UER00317"/>
</dbReference>
<dbReference type="UniPathway" id="UPA00668"/>
<dbReference type="Proteomes" id="UP000001510">
    <property type="component" value="Chromosome"/>
</dbReference>
<dbReference type="GO" id="GO:0005737">
    <property type="term" value="C:cytoplasm"/>
    <property type="evidence" value="ECO:0007669"/>
    <property type="project" value="UniProtKB-SubCell"/>
</dbReference>
<dbReference type="GO" id="GO:0042286">
    <property type="term" value="F:glutamate-1-semialdehyde 2,1-aminomutase activity"/>
    <property type="evidence" value="ECO:0007669"/>
    <property type="project" value="UniProtKB-UniRule"/>
</dbReference>
<dbReference type="GO" id="GO:0030170">
    <property type="term" value="F:pyridoxal phosphate binding"/>
    <property type="evidence" value="ECO:0007669"/>
    <property type="project" value="InterPro"/>
</dbReference>
<dbReference type="GO" id="GO:0008483">
    <property type="term" value="F:transaminase activity"/>
    <property type="evidence" value="ECO:0007669"/>
    <property type="project" value="InterPro"/>
</dbReference>
<dbReference type="GO" id="GO:0015995">
    <property type="term" value="P:chlorophyll biosynthetic process"/>
    <property type="evidence" value="ECO:0007669"/>
    <property type="project" value="UniProtKB-UniRule"/>
</dbReference>
<dbReference type="GO" id="GO:0006782">
    <property type="term" value="P:protoporphyrinogen IX biosynthetic process"/>
    <property type="evidence" value="ECO:0007669"/>
    <property type="project" value="UniProtKB-UniRule"/>
</dbReference>
<dbReference type="CDD" id="cd00610">
    <property type="entry name" value="OAT_like"/>
    <property type="match status" value="1"/>
</dbReference>
<dbReference type="FunFam" id="3.40.640.10:FF:000021">
    <property type="entry name" value="Glutamate-1-semialdehyde 2,1-aminomutase"/>
    <property type="match status" value="1"/>
</dbReference>
<dbReference type="FunFam" id="3.90.1150.10:FF:000012">
    <property type="entry name" value="Glutamate-1-semialdehyde 2,1-aminomutase"/>
    <property type="match status" value="1"/>
</dbReference>
<dbReference type="Gene3D" id="3.90.1150.10">
    <property type="entry name" value="Aspartate Aminotransferase, domain 1"/>
    <property type="match status" value="1"/>
</dbReference>
<dbReference type="Gene3D" id="3.40.640.10">
    <property type="entry name" value="Type I PLP-dependent aspartate aminotransferase-like (Major domain)"/>
    <property type="match status" value="1"/>
</dbReference>
<dbReference type="HAMAP" id="MF_00375">
    <property type="entry name" value="HemL_aminotrans_3"/>
    <property type="match status" value="1"/>
</dbReference>
<dbReference type="InterPro" id="IPR004639">
    <property type="entry name" value="4pyrrol_synth_GluAld_NH2Trfase"/>
</dbReference>
<dbReference type="InterPro" id="IPR005814">
    <property type="entry name" value="Aminotrans_3"/>
</dbReference>
<dbReference type="InterPro" id="IPR049704">
    <property type="entry name" value="Aminotrans_3_PPA_site"/>
</dbReference>
<dbReference type="InterPro" id="IPR015424">
    <property type="entry name" value="PyrdxlP-dep_Trfase"/>
</dbReference>
<dbReference type="InterPro" id="IPR015421">
    <property type="entry name" value="PyrdxlP-dep_Trfase_major"/>
</dbReference>
<dbReference type="InterPro" id="IPR015422">
    <property type="entry name" value="PyrdxlP-dep_Trfase_small"/>
</dbReference>
<dbReference type="NCBIfam" id="TIGR00713">
    <property type="entry name" value="hemL"/>
    <property type="match status" value="1"/>
</dbReference>
<dbReference type="NCBIfam" id="NF000818">
    <property type="entry name" value="PRK00062.1"/>
    <property type="match status" value="1"/>
</dbReference>
<dbReference type="PANTHER" id="PTHR43713">
    <property type="entry name" value="GLUTAMATE-1-SEMIALDEHYDE 2,1-AMINOMUTASE"/>
    <property type="match status" value="1"/>
</dbReference>
<dbReference type="PANTHER" id="PTHR43713:SF3">
    <property type="entry name" value="GLUTAMATE-1-SEMIALDEHYDE 2,1-AMINOMUTASE 1, CHLOROPLASTIC-RELATED"/>
    <property type="match status" value="1"/>
</dbReference>
<dbReference type="Pfam" id="PF00202">
    <property type="entry name" value="Aminotran_3"/>
    <property type="match status" value="1"/>
</dbReference>
<dbReference type="SUPFAM" id="SSF53383">
    <property type="entry name" value="PLP-dependent transferases"/>
    <property type="match status" value="1"/>
</dbReference>
<dbReference type="PROSITE" id="PS00600">
    <property type="entry name" value="AA_TRANSFER_CLASS_3"/>
    <property type="match status" value="1"/>
</dbReference>
<evidence type="ECO:0000255" key="1">
    <source>
        <dbReference type="HAMAP-Rule" id="MF_00375"/>
    </source>
</evidence>
<protein>
    <recommendedName>
        <fullName evidence="1">Glutamate-1-semialdehyde 2,1-aminomutase</fullName>
        <shortName evidence="1">GSA</shortName>
        <ecNumber evidence="1">5.4.3.8</ecNumber>
    </recommendedName>
    <alternativeName>
        <fullName evidence="1">Glutamate-1-semialdehyde aminotransferase</fullName>
        <shortName evidence="1">GSA-AT</shortName>
    </alternativeName>
</protein>
<comment type="catalytic activity">
    <reaction evidence="1">
        <text>(S)-4-amino-5-oxopentanoate = 5-aminolevulinate</text>
        <dbReference type="Rhea" id="RHEA:14265"/>
        <dbReference type="ChEBI" id="CHEBI:57501"/>
        <dbReference type="ChEBI" id="CHEBI:356416"/>
        <dbReference type="EC" id="5.4.3.8"/>
    </reaction>
</comment>
<comment type="cofactor">
    <cofactor evidence="1">
        <name>pyridoxal 5'-phosphate</name>
        <dbReference type="ChEBI" id="CHEBI:597326"/>
    </cofactor>
</comment>
<comment type="pathway">
    <text evidence="1">Porphyrin-containing compound metabolism; protoporphyrin-IX biosynthesis; 5-aminolevulinate from L-glutamyl-tRNA(Glu): step 2/2.</text>
</comment>
<comment type="pathway">
    <text evidence="1">Porphyrin-containing compound metabolism; chlorophyll biosynthesis.</text>
</comment>
<comment type="subunit">
    <text evidence="1">Homodimer.</text>
</comment>
<comment type="subcellular location">
    <subcellularLocation>
        <location evidence="1">Cytoplasm</location>
    </subcellularLocation>
</comment>
<comment type="similarity">
    <text evidence="1">Belongs to the class-III pyridoxal-phosphate-dependent aminotransferase family. HemL subfamily.</text>
</comment>